<protein>
    <recommendedName>
        <fullName evidence="1">Large ribosomal subunit protein uL15</fullName>
    </recommendedName>
    <alternativeName>
        <fullName evidence="3">50S ribosomal protein L15</fullName>
    </alternativeName>
</protein>
<evidence type="ECO:0000255" key="1">
    <source>
        <dbReference type="HAMAP-Rule" id="MF_01341"/>
    </source>
</evidence>
<evidence type="ECO:0000256" key="2">
    <source>
        <dbReference type="SAM" id="MobiDB-lite"/>
    </source>
</evidence>
<evidence type="ECO:0000305" key="3"/>
<name>RL15_LEGPC</name>
<organism>
    <name type="scientific">Legionella pneumophila (strain Corby)</name>
    <dbReference type="NCBI Taxonomy" id="400673"/>
    <lineage>
        <taxon>Bacteria</taxon>
        <taxon>Pseudomonadati</taxon>
        <taxon>Pseudomonadota</taxon>
        <taxon>Gammaproteobacteria</taxon>
        <taxon>Legionellales</taxon>
        <taxon>Legionellaceae</taxon>
        <taxon>Legionella</taxon>
    </lineage>
</organism>
<proteinExistence type="inferred from homology"/>
<feature type="chain" id="PRO_1000054483" description="Large ribosomal subunit protein uL15">
    <location>
        <begin position="1"/>
        <end position="144"/>
    </location>
</feature>
<feature type="region of interest" description="Disordered" evidence="2">
    <location>
        <begin position="1"/>
        <end position="45"/>
    </location>
</feature>
<feature type="compositionally biased region" description="Gly residues" evidence="2">
    <location>
        <begin position="21"/>
        <end position="31"/>
    </location>
</feature>
<sequence length="144" mass="15374">MNLNTLSPDPGSRPSRRRVGRGIGSGLGKTCGKGHKGQKSRAGGYHKINFEGGQMPIQRRLPKMGFKSREGRTIDEVSLGELAKLNDEVIDLVALRKAGLINNSIKDVKVILSGELTAAIKLKGLRVTKGARSAIESLGGSIEE</sequence>
<comment type="function">
    <text evidence="1">Binds to the 23S rRNA.</text>
</comment>
<comment type="subunit">
    <text evidence="1">Part of the 50S ribosomal subunit.</text>
</comment>
<comment type="similarity">
    <text evidence="1">Belongs to the universal ribosomal protein uL15 family.</text>
</comment>
<reference key="1">
    <citation type="submission" date="2006-11" db="EMBL/GenBank/DDBJ databases">
        <title>Identification and characterization of a new conjugation/ type IVA secretion system (trb/tra) of L. pneumophila Corby localized on a mobile genomic island.</title>
        <authorList>
            <person name="Gloeckner G."/>
            <person name="Albert-Weissenberger C."/>
            <person name="Weinmann E."/>
            <person name="Jacobi S."/>
            <person name="Schunder E."/>
            <person name="Steinert M."/>
            <person name="Buchrieser C."/>
            <person name="Hacker J."/>
            <person name="Heuner K."/>
        </authorList>
    </citation>
    <scope>NUCLEOTIDE SEQUENCE [LARGE SCALE GENOMIC DNA]</scope>
    <source>
        <strain>Corby</strain>
    </source>
</reference>
<gene>
    <name evidence="1" type="primary">rplO</name>
    <name type="ordered locus">LPC_2995</name>
</gene>
<dbReference type="EMBL" id="CP000675">
    <property type="protein sequence ID" value="ABQ56896.1"/>
    <property type="molecule type" value="Genomic_DNA"/>
</dbReference>
<dbReference type="RefSeq" id="WP_011945550.1">
    <property type="nucleotide sequence ID" value="NC_009494.2"/>
</dbReference>
<dbReference type="SMR" id="A5IHP6"/>
<dbReference type="KEGG" id="lpc:LPC_2995"/>
<dbReference type="HOGENOM" id="CLU_055188_4_2_6"/>
<dbReference type="GO" id="GO:0022625">
    <property type="term" value="C:cytosolic large ribosomal subunit"/>
    <property type="evidence" value="ECO:0007669"/>
    <property type="project" value="TreeGrafter"/>
</dbReference>
<dbReference type="GO" id="GO:0019843">
    <property type="term" value="F:rRNA binding"/>
    <property type="evidence" value="ECO:0007669"/>
    <property type="project" value="UniProtKB-UniRule"/>
</dbReference>
<dbReference type="GO" id="GO:0003735">
    <property type="term" value="F:structural constituent of ribosome"/>
    <property type="evidence" value="ECO:0007669"/>
    <property type="project" value="InterPro"/>
</dbReference>
<dbReference type="GO" id="GO:0006412">
    <property type="term" value="P:translation"/>
    <property type="evidence" value="ECO:0007669"/>
    <property type="project" value="UniProtKB-UniRule"/>
</dbReference>
<dbReference type="Gene3D" id="3.100.10.10">
    <property type="match status" value="1"/>
</dbReference>
<dbReference type="HAMAP" id="MF_01341">
    <property type="entry name" value="Ribosomal_uL15"/>
    <property type="match status" value="1"/>
</dbReference>
<dbReference type="InterPro" id="IPR030878">
    <property type="entry name" value="Ribosomal_uL15"/>
</dbReference>
<dbReference type="InterPro" id="IPR021131">
    <property type="entry name" value="Ribosomal_uL15/eL18"/>
</dbReference>
<dbReference type="InterPro" id="IPR036227">
    <property type="entry name" value="Ribosomal_uL15/eL18_sf"/>
</dbReference>
<dbReference type="InterPro" id="IPR005749">
    <property type="entry name" value="Ribosomal_uL15_bac-type"/>
</dbReference>
<dbReference type="InterPro" id="IPR001196">
    <property type="entry name" value="Ribosomal_uL15_CS"/>
</dbReference>
<dbReference type="NCBIfam" id="TIGR01071">
    <property type="entry name" value="rplO_bact"/>
    <property type="match status" value="1"/>
</dbReference>
<dbReference type="PANTHER" id="PTHR12934">
    <property type="entry name" value="50S RIBOSOMAL PROTEIN L15"/>
    <property type="match status" value="1"/>
</dbReference>
<dbReference type="PANTHER" id="PTHR12934:SF11">
    <property type="entry name" value="LARGE RIBOSOMAL SUBUNIT PROTEIN UL15M"/>
    <property type="match status" value="1"/>
</dbReference>
<dbReference type="Pfam" id="PF00828">
    <property type="entry name" value="Ribosomal_L27A"/>
    <property type="match status" value="1"/>
</dbReference>
<dbReference type="SUPFAM" id="SSF52080">
    <property type="entry name" value="Ribosomal proteins L15p and L18e"/>
    <property type="match status" value="1"/>
</dbReference>
<dbReference type="PROSITE" id="PS00475">
    <property type="entry name" value="RIBOSOMAL_L15"/>
    <property type="match status" value="1"/>
</dbReference>
<accession>A5IHP6</accession>
<keyword id="KW-0687">Ribonucleoprotein</keyword>
<keyword id="KW-0689">Ribosomal protein</keyword>
<keyword id="KW-0694">RNA-binding</keyword>
<keyword id="KW-0699">rRNA-binding</keyword>